<sequence length="831" mass="95363">MPSQSRSRDRYGRDSDRDRSRVQPRRRYHVSEDDDDDDDFDDNPRDRRYRRDGYRRAPVDSRAYDSHDDYEVVDVEEEPRRYRSDTERRRERARASPGTSPRKRERTRDSGGGHRRRRTEESDGSQAPQAHRDRRSRTRRDRGLDDEDLEDAARRLRRRERERERERRAETSKHKSTDSSNSSAGLLNANALAKLRAQHEELDRQEQRRAEKEAKAERKRRRKRPAVEGQMRTLDPFPDEVPRGQSKGRIVSGAYLEEGRAPDMEVRLRGGGRGPPRERRWEKDSDGSAPLTPFWKRKKWWWIGAIVLVIVVIIIVVAVVVSNNKKSDSDSDSDSNSGSSDSWGGDKSSLNGLDHDSIPKSAQGTVLDPWTWYETTDFNVTYTDETVGGLSVMGLNSTWDDSVAPNENVPPLNKPFPYGSQPIRGVNIGGLLSLEPFITPSLFEGYSSDVVDEYTLTTKLGDNAARKLEEHYATFITEQDFADMAEAGIDHVRIPFSYWAVNPREDEPYVAKISWRYLLRVIEYCRKYGLRVNLDPHGMPGSQNGMNHSGRQGSIRWLNGDDGDTYAQRSLEFHEKISKFFAQDRYKNIITIYGLINEPYMLSLDVEKVLNWTVTAAELVQKNGITAKIAFHDGFLNLSKWKTMLKNGPSNLLLDTHQYTIYNVAQIVLNHTAKVNFVCNDWVGMIGEINSTSEGWGPTICGEFTQADTDCAKNLNNVGRGTRWEGTYSEGDSTMYCPTAEQRTCSCTEANADPSEYSDDYKLFLKTYAEAQMYAFEQAQGWFYWTWHTESAPQWSYKTGWKNGFMPAKAYNPDYKCGDDIPSFGNLPEYY</sequence>
<comment type="function">
    <text evidence="4">Glucosidase involved in the degradation of cellulosic biomass. Active on lichenan.</text>
</comment>
<comment type="catalytic activity">
    <reaction>
        <text>Successive hydrolysis of beta-D-glucose units from the non-reducing ends of (1-&gt;3)-beta-D-glucans, releasing alpha-glucose.</text>
        <dbReference type="EC" id="3.2.1.58"/>
    </reaction>
</comment>
<comment type="subcellular location">
    <subcellularLocation>
        <location evidence="5">Cell membrane</location>
        <topology evidence="5">Single-pass type II membrane protein</topology>
    </subcellularLocation>
</comment>
<comment type="similarity">
    <text evidence="5">Belongs to the glycosyl hydrolase 5 (cellulase A) family.</text>
</comment>
<reference key="1">
    <citation type="journal article" date="2006" name="Proc. Natl. Acad. Sci. U.S.A.">
        <title>Development and application of a suite of polysaccharide-degrading enzymes for analyzing plant cell walls.</title>
        <authorList>
            <person name="Bauer S."/>
            <person name="Vasu P."/>
            <person name="Persson S."/>
            <person name="Mort A.J."/>
            <person name="Somerville C.R."/>
        </authorList>
    </citation>
    <scope>NUCLEOTIDE SEQUENCE [MRNA]</scope>
    <scope>FUNCTION</scope>
    <source>
        <strain>FGSC A4 / ATCC 38163 / CBS 112.46 / NRRL 194 / M139</strain>
    </source>
</reference>
<reference key="2">
    <citation type="journal article" date="2005" name="Nature">
        <title>Sequencing of Aspergillus nidulans and comparative analysis with A. fumigatus and A. oryzae.</title>
        <authorList>
            <person name="Galagan J.E."/>
            <person name="Calvo S.E."/>
            <person name="Cuomo C."/>
            <person name="Ma L.-J."/>
            <person name="Wortman J.R."/>
            <person name="Batzoglou S."/>
            <person name="Lee S.-I."/>
            <person name="Bastuerkmen M."/>
            <person name="Spevak C.C."/>
            <person name="Clutterbuck J."/>
            <person name="Kapitonov V."/>
            <person name="Jurka J."/>
            <person name="Scazzocchio C."/>
            <person name="Farman M.L."/>
            <person name="Butler J."/>
            <person name="Purcell S."/>
            <person name="Harris S."/>
            <person name="Braus G.H."/>
            <person name="Draht O."/>
            <person name="Busch S."/>
            <person name="D'Enfert C."/>
            <person name="Bouchier C."/>
            <person name="Goldman G.H."/>
            <person name="Bell-Pedersen D."/>
            <person name="Griffiths-Jones S."/>
            <person name="Doonan J.H."/>
            <person name="Yu J."/>
            <person name="Vienken K."/>
            <person name="Pain A."/>
            <person name="Freitag M."/>
            <person name="Selker E.U."/>
            <person name="Archer D.B."/>
            <person name="Penalva M.A."/>
            <person name="Oakley B.R."/>
            <person name="Momany M."/>
            <person name="Tanaka T."/>
            <person name="Kumagai T."/>
            <person name="Asai K."/>
            <person name="Machida M."/>
            <person name="Nierman W.C."/>
            <person name="Denning D.W."/>
            <person name="Caddick M.X."/>
            <person name="Hynes M."/>
            <person name="Paoletti M."/>
            <person name="Fischer R."/>
            <person name="Miller B.L."/>
            <person name="Dyer P.S."/>
            <person name="Sachs M.S."/>
            <person name="Osmani S.A."/>
            <person name="Birren B.W."/>
        </authorList>
    </citation>
    <scope>NUCLEOTIDE SEQUENCE [LARGE SCALE GENOMIC DNA]</scope>
    <source>
        <strain>FGSC A4 / ATCC 38163 / CBS 112.46 / NRRL 194 / M139</strain>
    </source>
</reference>
<reference key="3">
    <citation type="journal article" date="2009" name="Fungal Genet. Biol.">
        <title>The 2008 update of the Aspergillus nidulans genome annotation: a community effort.</title>
        <authorList>
            <person name="Wortman J.R."/>
            <person name="Gilsenan J.M."/>
            <person name="Joardar V."/>
            <person name="Deegan J."/>
            <person name="Clutterbuck J."/>
            <person name="Andersen M.R."/>
            <person name="Archer D."/>
            <person name="Bencina M."/>
            <person name="Braus G."/>
            <person name="Coutinho P."/>
            <person name="von Dohren H."/>
            <person name="Doonan J."/>
            <person name="Driessen A.J."/>
            <person name="Durek P."/>
            <person name="Espeso E."/>
            <person name="Fekete E."/>
            <person name="Flipphi M."/>
            <person name="Estrada C.G."/>
            <person name="Geysens S."/>
            <person name="Goldman G."/>
            <person name="de Groot P.W."/>
            <person name="Hansen K."/>
            <person name="Harris S.D."/>
            <person name="Heinekamp T."/>
            <person name="Helmstaedt K."/>
            <person name="Henrissat B."/>
            <person name="Hofmann G."/>
            <person name="Homan T."/>
            <person name="Horio T."/>
            <person name="Horiuchi H."/>
            <person name="James S."/>
            <person name="Jones M."/>
            <person name="Karaffa L."/>
            <person name="Karanyi Z."/>
            <person name="Kato M."/>
            <person name="Keller N."/>
            <person name="Kelly D.E."/>
            <person name="Kiel J.A."/>
            <person name="Kim J.M."/>
            <person name="van der Klei I.J."/>
            <person name="Klis F.M."/>
            <person name="Kovalchuk A."/>
            <person name="Krasevec N."/>
            <person name="Kubicek C.P."/>
            <person name="Liu B."/>
            <person name="Maccabe A."/>
            <person name="Meyer V."/>
            <person name="Mirabito P."/>
            <person name="Miskei M."/>
            <person name="Mos M."/>
            <person name="Mullins J."/>
            <person name="Nelson D.R."/>
            <person name="Nielsen J."/>
            <person name="Oakley B.R."/>
            <person name="Osmani S.A."/>
            <person name="Pakula T."/>
            <person name="Paszewski A."/>
            <person name="Paulsen I."/>
            <person name="Pilsyk S."/>
            <person name="Pocsi I."/>
            <person name="Punt P.J."/>
            <person name="Ram A.F."/>
            <person name="Ren Q."/>
            <person name="Robellet X."/>
            <person name="Robson G."/>
            <person name="Seiboth B."/>
            <person name="van Solingen P."/>
            <person name="Specht T."/>
            <person name="Sun J."/>
            <person name="Taheri-Talesh N."/>
            <person name="Takeshita N."/>
            <person name="Ussery D."/>
            <person name="vanKuyk P.A."/>
            <person name="Visser H."/>
            <person name="van de Vondervoort P.J."/>
            <person name="de Vries R.P."/>
            <person name="Walton J."/>
            <person name="Xiang X."/>
            <person name="Xiong Y."/>
            <person name="Zeng A.P."/>
            <person name="Brandt B.W."/>
            <person name="Cornell M.J."/>
            <person name="van den Hondel C.A."/>
            <person name="Visser J."/>
            <person name="Oliver S.G."/>
            <person name="Turner G."/>
        </authorList>
    </citation>
    <scope>GENOME REANNOTATION</scope>
    <source>
        <strain>FGSC A4 / ATCC 38163 / CBS 112.46 / NRRL 194 / M139</strain>
    </source>
</reference>
<dbReference type="EC" id="3.2.1.58"/>
<dbReference type="EMBL" id="DQ490510">
    <property type="protein sequence ID" value="ABF50886.1"/>
    <property type="molecule type" value="mRNA"/>
</dbReference>
<dbReference type="EMBL" id="AACD01000129">
    <property type="protein sequence ID" value="EAA62113.1"/>
    <property type="molecule type" value="Genomic_DNA"/>
</dbReference>
<dbReference type="EMBL" id="BN001304">
    <property type="protein sequence ID" value="CBF79583.1"/>
    <property type="molecule type" value="Genomic_DNA"/>
</dbReference>
<dbReference type="RefSeq" id="XP_680802.1">
    <property type="nucleotide sequence ID" value="XM_675710.1"/>
</dbReference>
<dbReference type="SMR" id="Q5AVZ7"/>
<dbReference type="STRING" id="227321.Q5AVZ7"/>
<dbReference type="CAZy" id="GH5">
    <property type="family name" value="Glycoside Hydrolase Family 5"/>
</dbReference>
<dbReference type="GlyCosmos" id="Q5AVZ7">
    <property type="glycosylation" value="7 sites, No reported glycans"/>
</dbReference>
<dbReference type="EnsemblFungi" id="CBF79583">
    <property type="protein sequence ID" value="CBF79583"/>
    <property type="gene ID" value="ANIA_07533"/>
</dbReference>
<dbReference type="KEGG" id="ani:ANIA_07533"/>
<dbReference type="VEuPathDB" id="FungiDB:AN7533"/>
<dbReference type="eggNOG" id="ENOG502QRG8">
    <property type="taxonomic scope" value="Eukaryota"/>
</dbReference>
<dbReference type="HOGENOM" id="CLU_004624_4_0_1"/>
<dbReference type="InParanoid" id="Q5AVZ7"/>
<dbReference type="OMA" id="WYWTWKT"/>
<dbReference type="OrthoDB" id="62120at2759"/>
<dbReference type="Proteomes" id="UP000000560">
    <property type="component" value="Chromosome IV"/>
</dbReference>
<dbReference type="GO" id="GO:0005886">
    <property type="term" value="C:plasma membrane"/>
    <property type="evidence" value="ECO:0007669"/>
    <property type="project" value="UniProtKB-SubCell"/>
</dbReference>
<dbReference type="GO" id="GO:0004338">
    <property type="term" value="F:glucan exo-1,3-beta-glucosidase activity"/>
    <property type="evidence" value="ECO:0000314"/>
    <property type="project" value="UniProtKB"/>
</dbReference>
<dbReference type="GO" id="GO:0071555">
    <property type="term" value="P:cell wall organization"/>
    <property type="evidence" value="ECO:0007669"/>
    <property type="project" value="UniProtKB-KW"/>
</dbReference>
<dbReference type="GO" id="GO:0009251">
    <property type="term" value="P:glucan catabolic process"/>
    <property type="evidence" value="ECO:0000314"/>
    <property type="project" value="UniProtKB"/>
</dbReference>
<dbReference type="FunFam" id="3.20.20.80:FF:000033">
    <property type="entry name" value="Glucan 1,3-beta-glucosidase A"/>
    <property type="match status" value="1"/>
</dbReference>
<dbReference type="Gene3D" id="3.20.20.80">
    <property type="entry name" value="Glycosidases"/>
    <property type="match status" value="1"/>
</dbReference>
<dbReference type="InterPro" id="IPR001547">
    <property type="entry name" value="Glyco_hydro_5"/>
</dbReference>
<dbReference type="InterPro" id="IPR017853">
    <property type="entry name" value="Glycoside_hydrolase_SF"/>
</dbReference>
<dbReference type="InterPro" id="IPR050386">
    <property type="entry name" value="Glycosyl_hydrolase_5"/>
</dbReference>
<dbReference type="PANTHER" id="PTHR31297:SF34">
    <property type="entry name" value="GLUCAN 1,3-BETA-GLUCOSIDASE 2"/>
    <property type="match status" value="1"/>
</dbReference>
<dbReference type="PANTHER" id="PTHR31297">
    <property type="entry name" value="GLUCAN ENDO-1,6-BETA-GLUCOSIDASE B"/>
    <property type="match status" value="1"/>
</dbReference>
<dbReference type="Pfam" id="PF00150">
    <property type="entry name" value="Cellulase"/>
    <property type="match status" value="1"/>
</dbReference>
<dbReference type="SUPFAM" id="SSF51445">
    <property type="entry name" value="(Trans)glycosidases"/>
    <property type="match status" value="1"/>
</dbReference>
<keyword id="KW-0119">Carbohydrate metabolism</keyword>
<keyword id="KW-1003">Cell membrane</keyword>
<keyword id="KW-0961">Cell wall biogenesis/degradation</keyword>
<keyword id="KW-0325">Glycoprotein</keyword>
<keyword id="KW-0326">Glycosidase</keyword>
<keyword id="KW-0378">Hydrolase</keyword>
<keyword id="KW-0472">Membrane</keyword>
<keyword id="KW-0624">Polysaccharide degradation</keyword>
<keyword id="KW-1185">Reference proteome</keyword>
<keyword id="KW-0735">Signal-anchor</keyword>
<keyword id="KW-0812">Transmembrane</keyword>
<keyword id="KW-1133">Transmembrane helix</keyword>
<organism>
    <name type="scientific">Emericella nidulans (strain FGSC A4 / ATCC 38163 / CBS 112.46 / NRRL 194 / M139)</name>
    <name type="common">Aspergillus nidulans</name>
    <dbReference type="NCBI Taxonomy" id="227321"/>
    <lineage>
        <taxon>Eukaryota</taxon>
        <taxon>Fungi</taxon>
        <taxon>Dikarya</taxon>
        <taxon>Ascomycota</taxon>
        <taxon>Pezizomycotina</taxon>
        <taxon>Eurotiomycetes</taxon>
        <taxon>Eurotiomycetidae</taxon>
        <taxon>Eurotiales</taxon>
        <taxon>Aspergillaceae</taxon>
        <taxon>Aspergillus</taxon>
        <taxon>Aspergillus subgen. Nidulantes</taxon>
    </lineage>
</organism>
<name>EXGD_EMENI</name>
<evidence type="ECO:0000250" key="1"/>
<evidence type="ECO:0000255" key="2"/>
<evidence type="ECO:0000256" key="3">
    <source>
        <dbReference type="SAM" id="MobiDB-lite"/>
    </source>
</evidence>
<evidence type="ECO:0000269" key="4">
    <source>
    </source>
</evidence>
<evidence type="ECO:0000305" key="5"/>
<feature type="chain" id="PRO_0000395168" description="Glucan 1,3-beta-glucosidase D">
    <location>
        <begin position="1"/>
        <end position="831"/>
    </location>
</feature>
<feature type="topological domain" description="Cytoplasmic" evidence="2">
    <location>
        <begin position="1"/>
        <end position="300"/>
    </location>
</feature>
<feature type="transmembrane region" description="Helical; Signal-anchor for type II membrane protein" evidence="2">
    <location>
        <begin position="301"/>
        <end position="321"/>
    </location>
</feature>
<feature type="topological domain" description="Extracellular" evidence="2">
    <location>
        <begin position="322"/>
        <end position="831"/>
    </location>
</feature>
<feature type="region of interest" description="Disordered" evidence="3">
    <location>
        <begin position="1"/>
        <end position="246"/>
    </location>
</feature>
<feature type="region of interest" description="Disordered" evidence="3">
    <location>
        <begin position="261"/>
        <end position="288"/>
    </location>
</feature>
<feature type="region of interest" description="Disordered" evidence="3">
    <location>
        <begin position="325"/>
        <end position="360"/>
    </location>
</feature>
<feature type="compositionally biased region" description="Basic and acidic residues" evidence="3">
    <location>
        <begin position="1"/>
        <end position="21"/>
    </location>
</feature>
<feature type="compositionally biased region" description="Acidic residues" evidence="3">
    <location>
        <begin position="32"/>
        <end position="41"/>
    </location>
</feature>
<feature type="compositionally biased region" description="Basic and acidic residues" evidence="3">
    <location>
        <begin position="42"/>
        <end position="70"/>
    </location>
</feature>
<feature type="compositionally biased region" description="Basic and acidic residues" evidence="3">
    <location>
        <begin position="78"/>
        <end position="94"/>
    </location>
</feature>
<feature type="compositionally biased region" description="Basic and acidic residues" evidence="3">
    <location>
        <begin position="151"/>
        <end position="177"/>
    </location>
</feature>
<feature type="compositionally biased region" description="Low complexity" evidence="3">
    <location>
        <begin position="178"/>
        <end position="195"/>
    </location>
</feature>
<feature type="compositionally biased region" description="Basic and acidic residues" evidence="3">
    <location>
        <begin position="197"/>
        <end position="216"/>
    </location>
</feature>
<feature type="compositionally biased region" description="Basic and acidic residues" evidence="3">
    <location>
        <begin position="275"/>
        <end position="286"/>
    </location>
</feature>
<feature type="compositionally biased region" description="Low complexity" evidence="3">
    <location>
        <begin position="334"/>
        <end position="350"/>
    </location>
</feature>
<feature type="active site" description="Proton donor" evidence="1">
    <location>
        <position position="598"/>
    </location>
</feature>
<feature type="active site" description="Nucleophile" evidence="1">
    <location>
        <position position="703"/>
    </location>
</feature>
<feature type="glycosylation site" description="N-linked (GlcNAc...) asparagine" evidence="2">
    <location>
        <position position="379"/>
    </location>
</feature>
<feature type="glycosylation site" description="N-linked (GlcNAc...) asparagine" evidence="2">
    <location>
        <position position="396"/>
    </location>
</feature>
<feature type="glycosylation site" description="N-linked (GlcNAc...) asparagine" evidence="2">
    <location>
        <position position="547"/>
    </location>
</feature>
<feature type="glycosylation site" description="N-linked (GlcNAc...) asparagine" evidence="2">
    <location>
        <position position="611"/>
    </location>
</feature>
<feature type="glycosylation site" description="N-linked (GlcNAc...) asparagine" evidence="2">
    <location>
        <position position="637"/>
    </location>
</feature>
<feature type="glycosylation site" description="N-linked (GlcNAc...) asparagine" evidence="2">
    <location>
        <position position="670"/>
    </location>
</feature>
<feature type="glycosylation site" description="N-linked (GlcNAc...) asparagine" evidence="2">
    <location>
        <position position="690"/>
    </location>
</feature>
<gene>
    <name type="primary">exgD</name>
    <name type="ORF">AN7533</name>
</gene>
<accession>Q5AVZ7</accession>
<accession>C8VBL9</accession>
<accession>Q1HFR4</accession>
<proteinExistence type="evidence at transcript level"/>
<protein>
    <recommendedName>
        <fullName>Glucan 1,3-beta-glucosidase D</fullName>
        <ecNumber>3.2.1.58</ecNumber>
    </recommendedName>
    <alternativeName>
        <fullName>Exo-1,3-beta-glucanase D</fullName>
    </alternativeName>
</protein>